<gene>
    <name evidence="1" type="primary">rbsA2</name>
    <name type="ordered locus">Rxyl_1684</name>
</gene>
<keyword id="KW-0067">ATP-binding</keyword>
<keyword id="KW-1003">Cell membrane</keyword>
<keyword id="KW-0472">Membrane</keyword>
<keyword id="KW-0547">Nucleotide-binding</keyword>
<keyword id="KW-1185">Reference proteome</keyword>
<keyword id="KW-0677">Repeat</keyword>
<keyword id="KW-0762">Sugar transport</keyword>
<keyword id="KW-1278">Translocase</keyword>
<keyword id="KW-0813">Transport</keyword>
<protein>
    <recommendedName>
        <fullName evidence="1">Ribose import ATP-binding protein RbsA 2</fullName>
        <ecNumber evidence="1">7.5.2.7</ecNumber>
    </recommendedName>
</protein>
<evidence type="ECO:0000255" key="1">
    <source>
        <dbReference type="HAMAP-Rule" id="MF_01716"/>
    </source>
</evidence>
<name>RBSA2_RUBXD</name>
<dbReference type="EC" id="7.5.2.7" evidence="1"/>
<dbReference type="EMBL" id="CP000386">
    <property type="protein sequence ID" value="ABG04645.1"/>
    <property type="molecule type" value="Genomic_DNA"/>
</dbReference>
<dbReference type="RefSeq" id="WP_011564662.1">
    <property type="nucleotide sequence ID" value="NC_008148.1"/>
</dbReference>
<dbReference type="SMR" id="Q1AVD3"/>
<dbReference type="STRING" id="266117.Rxyl_1684"/>
<dbReference type="KEGG" id="rxy:Rxyl_1684"/>
<dbReference type="eggNOG" id="COG1129">
    <property type="taxonomic scope" value="Bacteria"/>
</dbReference>
<dbReference type="HOGENOM" id="CLU_000604_92_2_11"/>
<dbReference type="OrthoDB" id="4326612at2"/>
<dbReference type="PhylomeDB" id="Q1AVD3"/>
<dbReference type="Proteomes" id="UP000006637">
    <property type="component" value="Chromosome"/>
</dbReference>
<dbReference type="GO" id="GO:0005886">
    <property type="term" value="C:plasma membrane"/>
    <property type="evidence" value="ECO:0007669"/>
    <property type="project" value="UniProtKB-SubCell"/>
</dbReference>
<dbReference type="GO" id="GO:0015611">
    <property type="term" value="F:ABC-type D-ribose transporter activity"/>
    <property type="evidence" value="ECO:0007669"/>
    <property type="project" value="UniProtKB-EC"/>
</dbReference>
<dbReference type="GO" id="GO:0005524">
    <property type="term" value="F:ATP binding"/>
    <property type="evidence" value="ECO:0007669"/>
    <property type="project" value="UniProtKB-KW"/>
</dbReference>
<dbReference type="GO" id="GO:0016887">
    <property type="term" value="F:ATP hydrolysis activity"/>
    <property type="evidence" value="ECO:0007669"/>
    <property type="project" value="InterPro"/>
</dbReference>
<dbReference type="CDD" id="cd03216">
    <property type="entry name" value="ABC_Carb_Monos_I"/>
    <property type="match status" value="1"/>
</dbReference>
<dbReference type="CDD" id="cd03215">
    <property type="entry name" value="ABC_Carb_Monos_II"/>
    <property type="match status" value="1"/>
</dbReference>
<dbReference type="FunFam" id="3.40.50.300:FF:000127">
    <property type="entry name" value="Ribose import ATP-binding protein RbsA"/>
    <property type="match status" value="1"/>
</dbReference>
<dbReference type="Gene3D" id="3.40.50.300">
    <property type="entry name" value="P-loop containing nucleotide triphosphate hydrolases"/>
    <property type="match status" value="2"/>
</dbReference>
<dbReference type="InterPro" id="IPR003593">
    <property type="entry name" value="AAA+_ATPase"/>
</dbReference>
<dbReference type="InterPro" id="IPR050107">
    <property type="entry name" value="ABC_carbohydrate_import_ATPase"/>
</dbReference>
<dbReference type="InterPro" id="IPR003439">
    <property type="entry name" value="ABC_transporter-like_ATP-bd"/>
</dbReference>
<dbReference type="InterPro" id="IPR017871">
    <property type="entry name" value="ABC_transporter-like_CS"/>
</dbReference>
<dbReference type="InterPro" id="IPR027417">
    <property type="entry name" value="P-loop_NTPase"/>
</dbReference>
<dbReference type="PANTHER" id="PTHR43790">
    <property type="entry name" value="CARBOHYDRATE TRANSPORT ATP-BINDING PROTEIN MG119-RELATED"/>
    <property type="match status" value="1"/>
</dbReference>
<dbReference type="PANTHER" id="PTHR43790:SF3">
    <property type="entry name" value="D-ALLOSE IMPORT ATP-BINDING PROTEIN ALSA-RELATED"/>
    <property type="match status" value="1"/>
</dbReference>
<dbReference type="Pfam" id="PF00005">
    <property type="entry name" value="ABC_tran"/>
    <property type="match status" value="2"/>
</dbReference>
<dbReference type="SMART" id="SM00382">
    <property type="entry name" value="AAA"/>
    <property type="match status" value="2"/>
</dbReference>
<dbReference type="SUPFAM" id="SSF52540">
    <property type="entry name" value="P-loop containing nucleoside triphosphate hydrolases"/>
    <property type="match status" value="2"/>
</dbReference>
<dbReference type="PROSITE" id="PS00211">
    <property type="entry name" value="ABC_TRANSPORTER_1"/>
    <property type="match status" value="1"/>
</dbReference>
<dbReference type="PROSITE" id="PS50893">
    <property type="entry name" value="ABC_TRANSPORTER_2"/>
    <property type="match status" value="2"/>
</dbReference>
<dbReference type="PROSITE" id="PS51254">
    <property type="entry name" value="RBSA"/>
    <property type="match status" value="1"/>
</dbReference>
<proteinExistence type="inferred from homology"/>
<reference key="1">
    <citation type="submission" date="2006-06" db="EMBL/GenBank/DDBJ databases">
        <title>Complete sequence of Rubrobacter xylanophilus DSM 9941.</title>
        <authorList>
            <consortium name="US DOE Joint Genome Institute"/>
            <person name="Copeland A."/>
            <person name="Lucas S."/>
            <person name="Lapidus A."/>
            <person name="Barry K."/>
            <person name="Detter J.C."/>
            <person name="Glavina del Rio T."/>
            <person name="Hammon N."/>
            <person name="Israni S."/>
            <person name="Dalin E."/>
            <person name="Tice H."/>
            <person name="Pitluck S."/>
            <person name="Munk A.C."/>
            <person name="Brettin T."/>
            <person name="Bruce D."/>
            <person name="Han C."/>
            <person name="Tapia R."/>
            <person name="Gilna P."/>
            <person name="Schmutz J."/>
            <person name="Larimer F."/>
            <person name="Land M."/>
            <person name="Hauser L."/>
            <person name="Kyrpides N."/>
            <person name="Lykidis A."/>
            <person name="da Costa M.S."/>
            <person name="Rainey F.A."/>
            <person name="Empadinhas N."/>
            <person name="Jolivet E."/>
            <person name="Battista J.R."/>
            <person name="Richardson P."/>
        </authorList>
    </citation>
    <scope>NUCLEOTIDE SEQUENCE [LARGE SCALE GENOMIC DNA]</scope>
    <source>
        <strain>DSM 9941 / JCM 11954 / NBRC 16129 / PRD-1</strain>
    </source>
</reference>
<accession>Q1AVD3</accession>
<feature type="chain" id="PRO_0000261096" description="Ribose import ATP-binding protein RbsA 2">
    <location>
        <begin position="1"/>
        <end position="519"/>
    </location>
</feature>
<feature type="domain" description="ABC transporter 1" evidence="1">
    <location>
        <begin position="15"/>
        <end position="252"/>
    </location>
</feature>
<feature type="domain" description="ABC transporter 2" evidence="1">
    <location>
        <begin position="262"/>
        <end position="506"/>
    </location>
</feature>
<feature type="binding site" evidence="1">
    <location>
        <begin position="47"/>
        <end position="54"/>
    </location>
    <ligand>
        <name>ATP</name>
        <dbReference type="ChEBI" id="CHEBI:30616"/>
    </ligand>
</feature>
<organism>
    <name type="scientific">Rubrobacter xylanophilus (strain DSM 9941 / JCM 11954 / NBRC 16129 / PRD-1)</name>
    <dbReference type="NCBI Taxonomy" id="266117"/>
    <lineage>
        <taxon>Bacteria</taxon>
        <taxon>Bacillati</taxon>
        <taxon>Actinomycetota</taxon>
        <taxon>Rubrobacteria</taxon>
        <taxon>Rubrobacterales</taxon>
        <taxon>Rubrobacteraceae</taxon>
        <taxon>Rubrobacter</taxon>
    </lineage>
</organism>
<comment type="function">
    <text evidence="1">Part of the ABC transporter complex RbsABC involved in ribose import. Responsible for energy coupling to the transport system.</text>
</comment>
<comment type="catalytic activity">
    <reaction evidence="1">
        <text>D-ribose(out) + ATP + H2O = D-ribose(in) + ADP + phosphate + H(+)</text>
        <dbReference type="Rhea" id="RHEA:29903"/>
        <dbReference type="ChEBI" id="CHEBI:15377"/>
        <dbReference type="ChEBI" id="CHEBI:15378"/>
        <dbReference type="ChEBI" id="CHEBI:30616"/>
        <dbReference type="ChEBI" id="CHEBI:43474"/>
        <dbReference type="ChEBI" id="CHEBI:47013"/>
        <dbReference type="ChEBI" id="CHEBI:456216"/>
        <dbReference type="EC" id="7.5.2.7"/>
    </reaction>
</comment>
<comment type="subunit">
    <text evidence="1">The complex is composed of an ATP-binding protein (RbsA), two transmembrane proteins (RbsC) and a solute-binding protein (RbsB).</text>
</comment>
<comment type="subcellular location">
    <subcellularLocation>
        <location evidence="1">Cell membrane</location>
        <topology evidence="1">Peripheral membrane protein</topology>
    </subcellularLocation>
</comment>
<comment type="similarity">
    <text evidence="1">Belongs to the ABC transporter superfamily. Ribose importer (TC 3.A.1.2.1) family.</text>
</comment>
<sequence>MERGAAPGGGKVPVFRLRGITKRFGGVTAVEGVDFELLPGEVHALVGENGAGKSTLMKIVGGLYAPDEGSLEVGGEPAAFSSPRESEAAGIAMIPQELDLFPELSVAENLYVGRRRPRTRWGGIDWGRMRREAGEKLASLGVGLDVSAPVKRLSTANQQLVAIARALLREARAVVMDEPTAALTGREAERLFGIIAGLRRRGVGVVYISHRLEEIFRIADRITVLRDGHLVKTAPASALDPDELVRLMVGRPLSEFFSRHPHEPGEVVLEVRGLGREGEFADVDLVLRRGEVVGLAGLIGAGRTELAQTIFGIRTPDRGEVRVFGEVLPPGSPREAMERGVFYVPEERKSQGLIAPFSVKDNITLSVLERFTRFGFVSRGPERELAGRLAGALSVRGGGIFDPVSRLSGGNQQKVVLAKSLAREPAVLLLDEPTRGIDVGAKSEIYRLIDRLAGEGRAVLLISSELEEILSMSDRVVVMREGRISGEFGREEATQERIMAAATGVRGPSAAVAEEEAGR</sequence>